<protein>
    <recommendedName>
        <fullName evidence="1">NADH-quinone oxidoreductase subunit K</fullName>
        <ecNumber evidence="1">7.1.1.-</ecNumber>
    </recommendedName>
    <alternativeName>
        <fullName evidence="1">NADH dehydrogenase I subunit K</fullName>
    </alternativeName>
    <alternativeName>
        <fullName evidence="1">NDH-1 subunit K</fullName>
    </alternativeName>
</protein>
<name>NUOK_ACIAD</name>
<comment type="function">
    <text evidence="1">NDH-1 shuttles electrons from NADH, via FMN and iron-sulfur (Fe-S) centers, to quinones in the respiratory chain. The immediate electron acceptor for the enzyme in this species is believed to be ubiquinone. Couples the redox reaction to proton translocation (for every two electrons transferred, four hydrogen ions are translocated across the cytoplasmic membrane), and thus conserves the redox energy in a proton gradient.</text>
</comment>
<comment type="catalytic activity">
    <reaction evidence="1">
        <text>a quinone + NADH + 5 H(+)(in) = a quinol + NAD(+) + 4 H(+)(out)</text>
        <dbReference type="Rhea" id="RHEA:57888"/>
        <dbReference type="ChEBI" id="CHEBI:15378"/>
        <dbReference type="ChEBI" id="CHEBI:24646"/>
        <dbReference type="ChEBI" id="CHEBI:57540"/>
        <dbReference type="ChEBI" id="CHEBI:57945"/>
        <dbReference type="ChEBI" id="CHEBI:132124"/>
    </reaction>
</comment>
<comment type="subunit">
    <text evidence="1">NDH-1 is composed of 14 different subunits. Subunits NuoA, H, J, K, L, M, N constitute the membrane sector of the complex.</text>
</comment>
<comment type="subcellular location">
    <subcellularLocation>
        <location evidence="1">Cell inner membrane</location>
        <topology evidence="1">Multi-pass membrane protein</topology>
    </subcellularLocation>
</comment>
<comment type="similarity">
    <text evidence="1">Belongs to the complex I subunit 4L family.</text>
</comment>
<feature type="chain" id="PRO_0000389919" description="NADH-quinone oxidoreductase subunit K">
    <location>
        <begin position="1"/>
        <end position="102"/>
    </location>
</feature>
<feature type="transmembrane region" description="Helical" evidence="1">
    <location>
        <begin position="6"/>
        <end position="26"/>
    </location>
</feature>
<feature type="transmembrane region" description="Helical" evidence="1">
    <location>
        <begin position="30"/>
        <end position="50"/>
    </location>
</feature>
<feature type="transmembrane region" description="Helical" evidence="1">
    <location>
        <begin position="62"/>
        <end position="82"/>
    </location>
</feature>
<keyword id="KW-0997">Cell inner membrane</keyword>
<keyword id="KW-1003">Cell membrane</keyword>
<keyword id="KW-0472">Membrane</keyword>
<keyword id="KW-0520">NAD</keyword>
<keyword id="KW-0874">Quinone</keyword>
<keyword id="KW-1278">Translocase</keyword>
<keyword id="KW-0812">Transmembrane</keyword>
<keyword id="KW-1133">Transmembrane helix</keyword>
<keyword id="KW-0813">Transport</keyword>
<keyword id="KW-0830">Ubiquinone</keyword>
<dbReference type="EC" id="7.1.1.-" evidence="1"/>
<dbReference type="EMBL" id="CR543861">
    <property type="protein sequence ID" value="CAG67646.1"/>
    <property type="molecule type" value="Genomic_DNA"/>
</dbReference>
<dbReference type="RefSeq" id="WP_004922503.1">
    <property type="nucleotide sequence ID" value="NC_005966.1"/>
</dbReference>
<dbReference type="SMR" id="Q6FE62"/>
<dbReference type="STRING" id="202950.GCA_001485005_02496"/>
<dbReference type="GeneID" id="67513310"/>
<dbReference type="KEGG" id="aci:ACIAD0740"/>
<dbReference type="eggNOG" id="COG0713">
    <property type="taxonomic scope" value="Bacteria"/>
</dbReference>
<dbReference type="HOGENOM" id="CLU_144724_0_1_6"/>
<dbReference type="OrthoDB" id="9801357at2"/>
<dbReference type="BioCyc" id="ASP62977:ACIAD_RS03385-MONOMER"/>
<dbReference type="Proteomes" id="UP000000430">
    <property type="component" value="Chromosome"/>
</dbReference>
<dbReference type="GO" id="GO:0030964">
    <property type="term" value="C:NADH dehydrogenase complex"/>
    <property type="evidence" value="ECO:0007669"/>
    <property type="project" value="TreeGrafter"/>
</dbReference>
<dbReference type="GO" id="GO:0005886">
    <property type="term" value="C:plasma membrane"/>
    <property type="evidence" value="ECO:0007669"/>
    <property type="project" value="UniProtKB-SubCell"/>
</dbReference>
<dbReference type="GO" id="GO:0050136">
    <property type="term" value="F:NADH:ubiquinone reductase (non-electrogenic) activity"/>
    <property type="evidence" value="ECO:0007669"/>
    <property type="project" value="UniProtKB-UniRule"/>
</dbReference>
<dbReference type="GO" id="GO:0048038">
    <property type="term" value="F:quinone binding"/>
    <property type="evidence" value="ECO:0007669"/>
    <property type="project" value="UniProtKB-KW"/>
</dbReference>
<dbReference type="GO" id="GO:0042773">
    <property type="term" value="P:ATP synthesis coupled electron transport"/>
    <property type="evidence" value="ECO:0007669"/>
    <property type="project" value="InterPro"/>
</dbReference>
<dbReference type="FunFam" id="1.10.287.3510:FF:000001">
    <property type="entry name" value="NADH-quinone oxidoreductase subunit K"/>
    <property type="match status" value="1"/>
</dbReference>
<dbReference type="Gene3D" id="1.10.287.3510">
    <property type="match status" value="1"/>
</dbReference>
<dbReference type="HAMAP" id="MF_01456">
    <property type="entry name" value="NDH1_NuoK"/>
    <property type="match status" value="1"/>
</dbReference>
<dbReference type="InterPro" id="IPR001133">
    <property type="entry name" value="NADH_UbQ_OxRdtase_chain4L/K"/>
</dbReference>
<dbReference type="InterPro" id="IPR039428">
    <property type="entry name" value="NUOK/Mnh_C1-like"/>
</dbReference>
<dbReference type="NCBIfam" id="NF004319">
    <property type="entry name" value="PRK05715.1-1"/>
    <property type="match status" value="1"/>
</dbReference>
<dbReference type="NCBIfam" id="NF004320">
    <property type="entry name" value="PRK05715.1-2"/>
    <property type="match status" value="1"/>
</dbReference>
<dbReference type="PANTHER" id="PTHR11434:SF16">
    <property type="entry name" value="NADH-UBIQUINONE OXIDOREDUCTASE CHAIN 4L"/>
    <property type="match status" value="1"/>
</dbReference>
<dbReference type="PANTHER" id="PTHR11434">
    <property type="entry name" value="NADH-UBIQUINONE OXIDOREDUCTASE SUBUNIT ND4L"/>
    <property type="match status" value="1"/>
</dbReference>
<dbReference type="Pfam" id="PF00420">
    <property type="entry name" value="Oxidored_q2"/>
    <property type="match status" value="1"/>
</dbReference>
<sequence>MGNIPLEHGLIVATILFALGFYGVMVRRNLLFMLMSLEIMMNAAALAFVLAGSVWAQPDGQIMFILILTLAAAEACIGLAIVLQFYHRFHHLDVDAASEMRG</sequence>
<evidence type="ECO:0000255" key="1">
    <source>
        <dbReference type="HAMAP-Rule" id="MF_01456"/>
    </source>
</evidence>
<gene>
    <name evidence="1" type="primary">nuoK</name>
    <name type="ordered locus">ACIAD0740</name>
</gene>
<accession>Q6FE62</accession>
<reference key="1">
    <citation type="journal article" date="2004" name="Nucleic Acids Res.">
        <title>Unique features revealed by the genome sequence of Acinetobacter sp. ADP1, a versatile and naturally transformation competent bacterium.</title>
        <authorList>
            <person name="Barbe V."/>
            <person name="Vallenet D."/>
            <person name="Fonknechten N."/>
            <person name="Kreimeyer A."/>
            <person name="Oztas S."/>
            <person name="Labarre L."/>
            <person name="Cruveiller S."/>
            <person name="Robert C."/>
            <person name="Duprat S."/>
            <person name="Wincker P."/>
            <person name="Ornston L.N."/>
            <person name="Weissenbach J."/>
            <person name="Marliere P."/>
            <person name="Cohen G.N."/>
            <person name="Medigue C."/>
        </authorList>
    </citation>
    <scope>NUCLEOTIDE SEQUENCE [LARGE SCALE GENOMIC DNA]</scope>
    <source>
        <strain>ATCC 33305 / BD413 / ADP1</strain>
    </source>
</reference>
<organism>
    <name type="scientific">Acinetobacter baylyi (strain ATCC 33305 / BD413 / ADP1)</name>
    <dbReference type="NCBI Taxonomy" id="62977"/>
    <lineage>
        <taxon>Bacteria</taxon>
        <taxon>Pseudomonadati</taxon>
        <taxon>Pseudomonadota</taxon>
        <taxon>Gammaproteobacteria</taxon>
        <taxon>Moraxellales</taxon>
        <taxon>Moraxellaceae</taxon>
        <taxon>Acinetobacter</taxon>
    </lineage>
</organism>
<proteinExistence type="inferred from homology"/>